<proteinExistence type="evidence at protein level"/>
<feature type="chain" id="PRO_0000271328" description="Toxin a">
    <location>
        <begin position="1"/>
        <end position="28" status="greater than"/>
    </location>
</feature>
<feature type="domain" description="LCN-type CS-alpha/beta" evidence="2">
    <location>
        <begin position="3"/>
        <end position="28" status="greater than"/>
    </location>
</feature>
<feature type="unsure residue" description="P or Q">
    <location>
        <position position="8"/>
    </location>
</feature>
<feature type="unsure residue" description="L or N">
    <location>
        <position position="9"/>
    </location>
</feature>
<feature type="unsure residue" description="N or A">
    <location>
        <position position="14"/>
    </location>
</feature>
<feature type="unsure residue" description="P or G">
    <location>
        <position position="17"/>
    </location>
</feature>
<feature type="non-terminal residue">
    <location>
        <position position="28"/>
    </location>
</feature>
<name>TXA_ANDCR</name>
<organism>
    <name type="scientific">Androctonus crassicauda</name>
    <name type="common">Arabian fat-tailed scorpion</name>
    <dbReference type="NCBI Taxonomy" id="122909"/>
    <lineage>
        <taxon>Eukaryota</taxon>
        <taxon>Metazoa</taxon>
        <taxon>Ecdysozoa</taxon>
        <taxon>Arthropoda</taxon>
        <taxon>Chelicerata</taxon>
        <taxon>Arachnida</taxon>
        <taxon>Scorpiones</taxon>
        <taxon>Buthida</taxon>
        <taxon>Buthoidea</taxon>
        <taxon>Buthidae</taxon>
        <taxon>Androctonus</taxon>
    </lineage>
</organism>
<reference key="1">
    <citation type="journal article" date="2006" name="Toxicon">
        <title>Characterization of venom components from the scorpion Androctonus crassicauda of Turkey: peptides and genes.</title>
        <authorList>
            <person name="Caliskan F."/>
            <person name="Garcia B.I."/>
            <person name="Coronas F.I.V."/>
            <person name="Batista C.V.F."/>
            <person name="Zamudio F.Z."/>
            <person name="Possani L.D."/>
        </authorList>
    </citation>
    <scope>PROTEIN SEQUENCE</scope>
    <scope>SUBCELLULAR LOCATION</scope>
    <source>
        <tissue>Venom</tissue>
    </source>
</reference>
<sequence>ADVPGNYPLDSYGNCYPCTILGDNQYCI</sequence>
<comment type="function">
    <text evidence="1">Binds to sodium channels (Nav) and affects the channel activation process.</text>
</comment>
<comment type="subcellular location">
    <subcellularLocation>
        <location evidence="3">Secreted</location>
    </subcellularLocation>
</comment>
<comment type="tissue specificity">
    <text evidence="6">Expressed by the venom gland.</text>
</comment>
<comment type="domain">
    <text evidence="5">Has the structural arrangement of an alpha-helix connected to antiparallel beta-sheets by disulfide bonds (CS-alpha/beta).</text>
</comment>
<comment type="similarity">
    <text>Belongs to the long (3 C-C) scorpion toxin superfamily.</text>
</comment>
<dbReference type="GO" id="GO:0005576">
    <property type="term" value="C:extracellular region"/>
    <property type="evidence" value="ECO:0007669"/>
    <property type="project" value="UniProtKB-SubCell"/>
</dbReference>
<dbReference type="GO" id="GO:0008200">
    <property type="term" value="F:ion channel inhibitor activity"/>
    <property type="evidence" value="ECO:0007669"/>
    <property type="project" value="InterPro"/>
</dbReference>
<dbReference type="GO" id="GO:0017080">
    <property type="term" value="F:sodium channel regulator activity"/>
    <property type="evidence" value="ECO:0007669"/>
    <property type="project" value="UniProtKB-KW"/>
</dbReference>
<dbReference type="GO" id="GO:0090729">
    <property type="term" value="F:toxin activity"/>
    <property type="evidence" value="ECO:0007669"/>
    <property type="project" value="UniProtKB-KW"/>
</dbReference>
<dbReference type="InterPro" id="IPR044062">
    <property type="entry name" value="LCN-type_CS_alpha_beta_dom"/>
</dbReference>
<dbReference type="PROSITE" id="PS51863">
    <property type="entry name" value="LCN_CSAB"/>
    <property type="match status" value="1"/>
</dbReference>
<keyword id="KW-0903">Direct protein sequencing</keyword>
<keyword id="KW-0872">Ion channel impairing toxin</keyword>
<keyword id="KW-0528">Neurotoxin</keyword>
<keyword id="KW-0964">Secreted</keyword>
<keyword id="KW-0800">Toxin</keyword>
<keyword id="KW-0738">Voltage-gated sodium channel impairing toxin</keyword>
<evidence type="ECO:0000250" key="1"/>
<evidence type="ECO:0000255" key="2">
    <source>
        <dbReference type="PROSITE-ProRule" id="PRU01210"/>
    </source>
</evidence>
<evidence type="ECO:0000269" key="3">
    <source>
    </source>
</evidence>
<evidence type="ECO:0000303" key="4">
    <source>
    </source>
</evidence>
<evidence type="ECO:0000305" key="5"/>
<evidence type="ECO:0000305" key="6">
    <source>
    </source>
</evidence>
<accession>P0C2A1</accession>
<protein>
    <recommendedName>
        <fullName evidence="5">Toxin a</fullName>
    </recommendedName>
    <alternativeName>
        <fullName evidence="4">Subcomponent a</fullName>
    </alternativeName>
</protein>